<feature type="chain" id="PRO_1000095224" description="Aspartyl/glutamyl-tRNA(Asn/Gln) amidotransferase subunit B">
    <location>
        <begin position="1"/>
        <end position="490"/>
    </location>
</feature>
<reference key="1">
    <citation type="submission" date="2008-03" db="EMBL/GenBank/DDBJ databases">
        <title>Complete sequence of chromosome of Methylobacterium radiotolerans JCM 2831.</title>
        <authorList>
            <consortium name="US DOE Joint Genome Institute"/>
            <person name="Copeland A."/>
            <person name="Lucas S."/>
            <person name="Lapidus A."/>
            <person name="Glavina del Rio T."/>
            <person name="Dalin E."/>
            <person name="Tice H."/>
            <person name="Bruce D."/>
            <person name="Goodwin L."/>
            <person name="Pitluck S."/>
            <person name="Kiss H."/>
            <person name="Brettin T."/>
            <person name="Detter J.C."/>
            <person name="Han C."/>
            <person name="Kuske C.R."/>
            <person name="Schmutz J."/>
            <person name="Larimer F."/>
            <person name="Land M."/>
            <person name="Hauser L."/>
            <person name="Kyrpides N."/>
            <person name="Mikhailova N."/>
            <person name="Marx C.J."/>
            <person name="Richardson P."/>
        </authorList>
    </citation>
    <scope>NUCLEOTIDE SEQUENCE [LARGE SCALE GENOMIC DNA]</scope>
    <source>
        <strain>ATCC 27329 / DSM 1819 / JCM 2831 / NBRC 15690 / NCIMB 10815 / 0-1</strain>
    </source>
</reference>
<dbReference type="EC" id="6.3.5.-" evidence="1"/>
<dbReference type="EMBL" id="CP001001">
    <property type="protein sequence ID" value="ACB22492.1"/>
    <property type="molecule type" value="Genomic_DNA"/>
</dbReference>
<dbReference type="RefSeq" id="WP_012317488.1">
    <property type="nucleotide sequence ID" value="NC_010505.1"/>
</dbReference>
<dbReference type="SMR" id="B1LUB2"/>
<dbReference type="STRING" id="426355.Mrad2831_0481"/>
<dbReference type="GeneID" id="6136494"/>
<dbReference type="KEGG" id="mrd:Mrad2831_0481"/>
<dbReference type="eggNOG" id="COG0064">
    <property type="taxonomic scope" value="Bacteria"/>
</dbReference>
<dbReference type="HOGENOM" id="CLU_019240_0_0_5"/>
<dbReference type="OrthoDB" id="9804078at2"/>
<dbReference type="Proteomes" id="UP000006589">
    <property type="component" value="Chromosome"/>
</dbReference>
<dbReference type="GO" id="GO:0050566">
    <property type="term" value="F:asparaginyl-tRNA synthase (glutamine-hydrolyzing) activity"/>
    <property type="evidence" value="ECO:0007669"/>
    <property type="project" value="RHEA"/>
</dbReference>
<dbReference type="GO" id="GO:0005524">
    <property type="term" value="F:ATP binding"/>
    <property type="evidence" value="ECO:0007669"/>
    <property type="project" value="UniProtKB-KW"/>
</dbReference>
<dbReference type="GO" id="GO:0050567">
    <property type="term" value="F:glutaminyl-tRNA synthase (glutamine-hydrolyzing) activity"/>
    <property type="evidence" value="ECO:0007669"/>
    <property type="project" value="UniProtKB-UniRule"/>
</dbReference>
<dbReference type="GO" id="GO:0070681">
    <property type="term" value="P:glutaminyl-tRNAGln biosynthesis via transamidation"/>
    <property type="evidence" value="ECO:0007669"/>
    <property type="project" value="TreeGrafter"/>
</dbReference>
<dbReference type="GO" id="GO:0006412">
    <property type="term" value="P:translation"/>
    <property type="evidence" value="ECO:0007669"/>
    <property type="project" value="UniProtKB-UniRule"/>
</dbReference>
<dbReference type="FunFam" id="1.10.10.410:FF:000001">
    <property type="entry name" value="Aspartyl/glutamyl-tRNA(Asn/Gln) amidotransferase subunit B"/>
    <property type="match status" value="1"/>
</dbReference>
<dbReference type="FunFam" id="1.10.150.380:FF:000001">
    <property type="entry name" value="Aspartyl/glutamyl-tRNA(Asn/Gln) amidotransferase subunit B"/>
    <property type="match status" value="1"/>
</dbReference>
<dbReference type="Gene3D" id="1.10.10.410">
    <property type="match status" value="1"/>
</dbReference>
<dbReference type="Gene3D" id="1.10.150.380">
    <property type="entry name" value="GatB domain, N-terminal subdomain"/>
    <property type="match status" value="1"/>
</dbReference>
<dbReference type="HAMAP" id="MF_00121">
    <property type="entry name" value="GatB"/>
    <property type="match status" value="1"/>
</dbReference>
<dbReference type="InterPro" id="IPR017959">
    <property type="entry name" value="Asn/Gln-tRNA_amidoTrfase_suB/E"/>
</dbReference>
<dbReference type="InterPro" id="IPR006075">
    <property type="entry name" value="Asn/Gln-tRNA_Trfase_suB/E_cat"/>
</dbReference>
<dbReference type="InterPro" id="IPR018027">
    <property type="entry name" value="Asn/Gln_amidotransferase"/>
</dbReference>
<dbReference type="InterPro" id="IPR003789">
    <property type="entry name" value="Asn/Gln_tRNA_amidoTrase-B-like"/>
</dbReference>
<dbReference type="InterPro" id="IPR004413">
    <property type="entry name" value="GatB"/>
</dbReference>
<dbReference type="InterPro" id="IPR042114">
    <property type="entry name" value="GatB_C_1"/>
</dbReference>
<dbReference type="InterPro" id="IPR023168">
    <property type="entry name" value="GatB_Yqey_C_2"/>
</dbReference>
<dbReference type="InterPro" id="IPR017958">
    <property type="entry name" value="Gln-tRNA_amidoTrfase_suB_CS"/>
</dbReference>
<dbReference type="InterPro" id="IPR014746">
    <property type="entry name" value="Gln_synth/guanido_kin_cat_dom"/>
</dbReference>
<dbReference type="NCBIfam" id="TIGR00133">
    <property type="entry name" value="gatB"/>
    <property type="match status" value="1"/>
</dbReference>
<dbReference type="NCBIfam" id="NF004012">
    <property type="entry name" value="PRK05477.1-2"/>
    <property type="match status" value="1"/>
</dbReference>
<dbReference type="NCBIfam" id="NF004014">
    <property type="entry name" value="PRK05477.1-4"/>
    <property type="match status" value="1"/>
</dbReference>
<dbReference type="NCBIfam" id="NF004015">
    <property type="entry name" value="PRK05477.1-5"/>
    <property type="match status" value="1"/>
</dbReference>
<dbReference type="PANTHER" id="PTHR11659">
    <property type="entry name" value="GLUTAMYL-TRNA GLN AMIDOTRANSFERASE SUBUNIT B MITOCHONDRIAL AND PROKARYOTIC PET112-RELATED"/>
    <property type="match status" value="1"/>
</dbReference>
<dbReference type="PANTHER" id="PTHR11659:SF0">
    <property type="entry name" value="GLUTAMYL-TRNA(GLN) AMIDOTRANSFERASE SUBUNIT B, MITOCHONDRIAL"/>
    <property type="match status" value="1"/>
</dbReference>
<dbReference type="Pfam" id="PF02934">
    <property type="entry name" value="GatB_N"/>
    <property type="match status" value="1"/>
</dbReference>
<dbReference type="Pfam" id="PF02637">
    <property type="entry name" value="GatB_Yqey"/>
    <property type="match status" value="1"/>
</dbReference>
<dbReference type="SMART" id="SM00845">
    <property type="entry name" value="GatB_Yqey"/>
    <property type="match status" value="1"/>
</dbReference>
<dbReference type="SUPFAM" id="SSF89095">
    <property type="entry name" value="GatB/YqeY motif"/>
    <property type="match status" value="1"/>
</dbReference>
<dbReference type="SUPFAM" id="SSF55931">
    <property type="entry name" value="Glutamine synthetase/guanido kinase"/>
    <property type="match status" value="1"/>
</dbReference>
<dbReference type="PROSITE" id="PS01234">
    <property type="entry name" value="GATB"/>
    <property type="match status" value="1"/>
</dbReference>
<organism>
    <name type="scientific">Methylobacterium radiotolerans (strain ATCC 27329 / DSM 1819 / JCM 2831 / NBRC 15690 / NCIMB 10815 / 0-1)</name>
    <dbReference type="NCBI Taxonomy" id="426355"/>
    <lineage>
        <taxon>Bacteria</taxon>
        <taxon>Pseudomonadati</taxon>
        <taxon>Pseudomonadota</taxon>
        <taxon>Alphaproteobacteria</taxon>
        <taxon>Hyphomicrobiales</taxon>
        <taxon>Methylobacteriaceae</taxon>
        <taxon>Methylobacterium</taxon>
    </lineage>
</organism>
<gene>
    <name evidence="1" type="primary">gatB</name>
    <name type="ordered locus">Mrad2831_0481</name>
</gene>
<comment type="function">
    <text evidence="1">Allows the formation of correctly charged Asn-tRNA(Asn) or Gln-tRNA(Gln) through the transamidation of misacylated Asp-tRNA(Asn) or Glu-tRNA(Gln) in organisms which lack either or both of asparaginyl-tRNA or glutaminyl-tRNA synthetases. The reaction takes place in the presence of glutamine and ATP through an activated phospho-Asp-tRNA(Asn) or phospho-Glu-tRNA(Gln).</text>
</comment>
<comment type="catalytic activity">
    <reaction evidence="1">
        <text>L-glutamyl-tRNA(Gln) + L-glutamine + ATP + H2O = L-glutaminyl-tRNA(Gln) + L-glutamate + ADP + phosphate + H(+)</text>
        <dbReference type="Rhea" id="RHEA:17521"/>
        <dbReference type="Rhea" id="RHEA-COMP:9681"/>
        <dbReference type="Rhea" id="RHEA-COMP:9684"/>
        <dbReference type="ChEBI" id="CHEBI:15377"/>
        <dbReference type="ChEBI" id="CHEBI:15378"/>
        <dbReference type="ChEBI" id="CHEBI:29985"/>
        <dbReference type="ChEBI" id="CHEBI:30616"/>
        <dbReference type="ChEBI" id="CHEBI:43474"/>
        <dbReference type="ChEBI" id="CHEBI:58359"/>
        <dbReference type="ChEBI" id="CHEBI:78520"/>
        <dbReference type="ChEBI" id="CHEBI:78521"/>
        <dbReference type="ChEBI" id="CHEBI:456216"/>
    </reaction>
</comment>
<comment type="catalytic activity">
    <reaction evidence="1">
        <text>L-aspartyl-tRNA(Asn) + L-glutamine + ATP + H2O = L-asparaginyl-tRNA(Asn) + L-glutamate + ADP + phosphate + 2 H(+)</text>
        <dbReference type="Rhea" id="RHEA:14513"/>
        <dbReference type="Rhea" id="RHEA-COMP:9674"/>
        <dbReference type="Rhea" id="RHEA-COMP:9677"/>
        <dbReference type="ChEBI" id="CHEBI:15377"/>
        <dbReference type="ChEBI" id="CHEBI:15378"/>
        <dbReference type="ChEBI" id="CHEBI:29985"/>
        <dbReference type="ChEBI" id="CHEBI:30616"/>
        <dbReference type="ChEBI" id="CHEBI:43474"/>
        <dbReference type="ChEBI" id="CHEBI:58359"/>
        <dbReference type="ChEBI" id="CHEBI:78515"/>
        <dbReference type="ChEBI" id="CHEBI:78516"/>
        <dbReference type="ChEBI" id="CHEBI:456216"/>
    </reaction>
</comment>
<comment type="subunit">
    <text evidence="1">Heterotrimer of A, B and C subunits.</text>
</comment>
<comment type="similarity">
    <text evidence="1">Belongs to the GatB/GatE family. GatB subfamily.</text>
</comment>
<keyword id="KW-0067">ATP-binding</keyword>
<keyword id="KW-0436">Ligase</keyword>
<keyword id="KW-0547">Nucleotide-binding</keyword>
<keyword id="KW-0648">Protein biosynthesis</keyword>
<name>GATB_METRJ</name>
<proteinExistence type="inferred from homology"/>
<sequence length="490" mass="53117">MNAPVDPKKLIKGGLHDWEVIVGMEIHAQVSSRAKLFSGASTEFGAEPNDHVSLVDAAMPGMLPVINAECVAQAVRTGLGLKAKINLRSVFDRKNYFYPDLPQGYQISQYKDPIVGEGEVLVDLADGASITVGIERLHLEQDAGKSLHDQDPTRSFVDLNRSGVALMEIVSRPDLRSSEEAKAYVTKLRTILRYLGTCDGDMEKGSLRADVNVSVRRPGEPLGTRCEIKNVNSIRFIGQAIETEARRQIAILEDGGTIDQETRLFDPTKGETRSMRSKEEAHDYRYFPDPDLLPLEFDQAYVDALAEGLPELPDAKKARFVSAFGLSPYDAGVLVAERASADYYEAVAKGRDGKAAANWVINELFGRLNKEGLSIEATPVSADQLGTIIDLIGEGVISGKIAKDLFEIVWTEGGDPRVVVESRGMKQVTDTGAIEAAVDQIIAANPDKVAQAKEKPTLLGWFVGQTMKATGGKANPAAVNALLKAKLGIE</sequence>
<accession>B1LUB2</accession>
<evidence type="ECO:0000255" key="1">
    <source>
        <dbReference type="HAMAP-Rule" id="MF_00121"/>
    </source>
</evidence>
<protein>
    <recommendedName>
        <fullName evidence="1">Aspartyl/glutamyl-tRNA(Asn/Gln) amidotransferase subunit B</fullName>
        <shortName evidence="1">Asp/Glu-ADT subunit B</shortName>
        <ecNumber evidence="1">6.3.5.-</ecNumber>
    </recommendedName>
</protein>